<sequence length="112" mass="12480">MSNIYDSANELSRGLRGLPEYKAVKAAKDAIAADAEASKIFTEYLAFQEEIQKLAHTGQMPDASFQAKMEGFGKQIQGNSLLSEFFTKQQQLAIYLSDIEKIVFEPVSELLK</sequence>
<organism>
    <name type="scientific">Streptococcus pneumoniae (strain ATCC 700669 / Spain 23F-1)</name>
    <dbReference type="NCBI Taxonomy" id="561276"/>
    <lineage>
        <taxon>Bacteria</taxon>
        <taxon>Bacillati</taxon>
        <taxon>Bacillota</taxon>
        <taxon>Bacilli</taxon>
        <taxon>Lactobacillales</taxon>
        <taxon>Streptococcaceae</taxon>
        <taxon>Streptococcus</taxon>
    </lineage>
</organism>
<evidence type="ECO:0000255" key="1">
    <source>
        <dbReference type="HAMAP-Rule" id="MF_01526"/>
    </source>
</evidence>
<feature type="chain" id="PRO_1000185145" description="UPF0342 protein SPN23F13380">
    <location>
        <begin position="1"/>
        <end position="112"/>
    </location>
</feature>
<reference key="1">
    <citation type="journal article" date="2009" name="J. Bacteriol.">
        <title>Role of conjugative elements in the evolution of the multidrug-resistant pandemic clone Streptococcus pneumoniae Spain23F ST81.</title>
        <authorList>
            <person name="Croucher N.J."/>
            <person name="Walker D."/>
            <person name="Romero P."/>
            <person name="Lennard N."/>
            <person name="Paterson G.K."/>
            <person name="Bason N.C."/>
            <person name="Mitchell A.M."/>
            <person name="Quail M.A."/>
            <person name="Andrew P.W."/>
            <person name="Parkhill J."/>
            <person name="Bentley S.D."/>
            <person name="Mitchell T.J."/>
        </authorList>
    </citation>
    <scope>NUCLEOTIDE SEQUENCE [LARGE SCALE GENOMIC DNA]</scope>
    <source>
        <strain>ATCC 700669 / Spain 23F-1</strain>
    </source>
</reference>
<comment type="similarity">
    <text evidence="1">Belongs to the UPF0342 family.</text>
</comment>
<protein>
    <recommendedName>
        <fullName evidence="1">UPF0342 protein SPN23F13380</fullName>
    </recommendedName>
</protein>
<name>Y1338_STRPJ</name>
<accession>B8ZKM1</accession>
<dbReference type="EMBL" id="FM211187">
    <property type="protein sequence ID" value="CAR69138.1"/>
    <property type="molecule type" value="Genomic_DNA"/>
</dbReference>
<dbReference type="RefSeq" id="WP_000065988.1">
    <property type="nucleotide sequence ID" value="NC_011900.1"/>
</dbReference>
<dbReference type="SMR" id="B8ZKM1"/>
<dbReference type="KEGG" id="sne:SPN23F13380"/>
<dbReference type="HOGENOM" id="CLU_140243_2_0_9"/>
<dbReference type="Gene3D" id="1.20.1500.10">
    <property type="entry name" value="YheA/YmcA-like"/>
    <property type="match status" value="1"/>
</dbReference>
<dbReference type="HAMAP" id="MF_01526">
    <property type="entry name" value="UPF0342"/>
    <property type="match status" value="1"/>
</dbReference>
<dbReference type="InterPro" id="IPR010368">
    <property type="entry name" value="Com_YlbF"/>
</dbReference>
<dbReference type="InterPro" id="IPR023378">
    <property type="entry name" value="YheA/YmcA-like_dom_sf"/>
</dbReference>
<dbReference type="NCBIfam" id="NF010209">
    <property type="entry name" value="PRK13676.1-1"/>
    <property type="match status" value="1"/>
</dbReference>
<dbReference type="Pfam" id="PF06133">
    <property type="entry name" value="Com_YlbF"/>
    <property type="match status" value="1"/>
</dbReference>
<dbReference type="SUPFAM" id="SSF158622">
    <property type="entry name" value="YheA/YmcA-like"/>
    <property type="match status" value="1"/>
</dbReference>
<gene>
    <name type="ordered locus">SPN23F13380</name>
</gene>
<proteinExistence type="inferred from homology"/>